<dbReference type="PIR" id="A28091">
    <property type="entry name" value="A28091"/>
</dbReference>
<dbReference type="SMR" id="P15427"/>
<dbReference type="GO" id="GO:0005615">
    <property type="term" value="C:extracellular space"/>
    <property type="evidence" value="ECO:0007669"/>
    <property type="project" value="TreeGrafter"/>
</dbReference>
<dbReference type="GO" id="GO:0005184">
    <property type="term" value="F:neuropeptide hormone activity"/>
    <property type="evidence" value="ECO:0007669"/>
    <property type="project" value="TreeGrafter"/>
</dbReference>
<dbReference type="GO" id="GO:0031841">
    <property type="term" value="F:neuropeptide Y receptor binding"/>
    <property type="evidence" value="ECO:0007669"/>
    <property type="project" value="TreeGrafter"/>
</dbReference>
<dbReference type="GO" id="GO:0007631">
    <property type="term" value="P:feeding behavior"/>
    <property type="evidence" value="ECO:0007669"/>
    <property type="project" value="TreeGrafter"/>
</dbReference>
<dbReference type="GO" id="GO:0007218">
    <property type="term" value="P:neuropeptide signaling pathway"/>
    <property type="evidence" value="ECO:0007669"/>
    <property type="project" value="TreeGrafter"/>
</dbReference>
<dbReference type="CDD" id="cd00126">
    <property type="entry name" value="PAH"/>
    <property type="match status" value="1"/>
</dbReference>
<dbReference type="Gene3D" id="6.10.250.900">
    <property type="match status" value="1"/>
</dbReference>
<dbReference type="InterPro" id="IPR001955">
    <property type="entry name" value="Pancreatic_hormone-like"/>
</dbReference>
<dbReference type="InterPro" id="IPR020392">
    <property type="entry name" value="Pancreatic_hormone-like_CS"/>
</dbReference>
<dbReference type="PANTHER" id="PTHR10533">
    <property type="entry name" value="NEUROPEPTIDE Y/PANCREATIC HORMONE/PEPTIDE YY"/>
    <property type="match status" value="1"/>
</dbReference>
<dbReference type="PANTHER" id="PTHR10533:SF2">
    <property type="entry name" value="PANCREATIC POLYPEPTIDE PROHORMONE"/>
    <property type="match status" value="1"/>
</dbReference>
<dbReference type="Pfam" id="PF00159">
    <property type="entry name" value="Hormone_3"/>
    <property type="match status" value="1"/>
</dbReference>
<dbReference type="PRINTS" id="PR00278">
    <property type="entry name" value="PANCHORMONE"/>
</dbReference>
<dbReference type="SMART" id="SM00309">
    <property type="entry name" value="PAH"/>
    <property type="match status" value="1"/>
</dbReference>
<dbReference type="PROSITE" id="PS00265">
    <property type="entry name" value="PANCREATIC_HORMONE_1"/>
    <property type="match status" value="1"/>
</dbReference>
<dbReference type="PROSITE" id="PS50276">
    <property type="entry name" value="PANCREATIC_HORMONE_2"/>
    <property type="match status" value="1"/>
</dbReference>
<proteinExistence type="evidence at protein level"/>
<reference key="1">
    <citation type="journal article" date="1988" name="J. Biol. Chem.">
        <title>Isolation of peptide hormones from the pancreas of the bullfrog (Rana catesbeiana). Amino acid sequences of pancreatic polypeptide, oxyntomodulin, and two glucagon-like peptides.</title>
        <authorList>
            <person name="Pollock H.G."/>
            <person name="Hamilton J.W."/>
            <person name="Rouse J.B."/>
            <person name="Ebner K.E."/>
            <person name="Rawitch A.B."/>
        </authorList>
    </citation>
    <scope>PROTEIN SEQUENCE</scope>
    <scope>AMIDATION AT PHE-36</scope>
    <source>
        <tissue>Pancreas</tissue>
    </source>
</reference>
<feature type="peptide" id="PRO_0000044808" description="Pancreatic polypeptide">
    <location>
        <begin position="1"/>
        <end position="36"/>
    </location>
</feature>
<feature type="modified residue" description="Phenylalanine amide" evidence="2">
    <location>
        <position position="36"/>
    </location>
</feature>
<accession>P15427</accession>
<organism>
    <name type="scientific">Aquarana catesbeiana</name>
    <name type="common">American bullfrog</name>
    <name type="synonym">Rana catesbeiana</name>
    <dbReference type="NCBI Taxonomy" id="8400"/>
    <lineage>
        <taxon>Eukaryota</taxon>
        <taxon>Metazoa</taxon>
        <taxon>Chordata</taxon>
        <taxon>Craniata</taxon>
        <taxon>Vertebrata</taxon>
        <taxon>Euteleostomi</taxon>
        <taxon>Amphibia</taxon>
        <taxon>Batrachia</taxon>
        <taxon>Anura</taxon>
        <taxon>Neobatrachia</taxon>
        <taxon>Ranoidea</taxon>
        <taxon>Ranidae</taxon>
        <taxon>Aquarana</taxon>
    </lineage>
</organism>
<sequence>APSEPHHPGDQATPDQLAQYYSDLYQYITFITRPRF</sequence>
<gene>
    <name type="primary">ppy</name>
</gene>
<keyword id="KW-0027">Amidation</keyword>
<keyword id="KW-0903">Direct protein sequencing</keyword>
<keyword id="KW-0372">Hormone</keyword>
<keyword id="KW-0964">Secreted</keyword>
<protein>
    <recommendedName>
        <fullName evidence="3">Pancreatic polypeptide</fullName>
        <shortName evidence="3">PP</shortName>
    </recommendedName>
</protein>
<comment type="function">
    <text evidence="1">Hormone secreted by pancreatic cells that acts as a regulator of pancreatic and gastrointestinal functions.</text>
</comment>
<comment type="subcellular location">
    <subcellularLocation>
        <location evidence="1">Secreted</location>
    </subcellularLocation>
</comment>
<comment type="similarity">
    <text evidence="4">Belongs to the NPY family.</text>
</comment>
<evidence type="ECO:0000250" key="1">
    <source>
        <dbReference type="UniProtKB" id="P01298"/>
    </source>
</evidence>
<evidence type="ECO:0000269" key="2">
    <source>
    </source>
</evidence>
<evidence type="ECO:0000303" key="3">
    <source>
    </source>
</evidence>
<evidence type="ECO:0000305" key="4"/>
<name>PAHO_AQUCT</name>